<protein>
    <recommendedName>
        <fullName evidence="9">AA9 family lytic polysaccharide monooxygenase H</fullName>
        <shortName evidence="9">AA9H</shortName>
        <ecNumber evidence="11">1.14.99.56</ecNumber>
    </recommendedName>
    <alternativeName>
        <fullName evidence="10">Endo-1,4-beta-glucanase AA9H</fullName>
        <shortName evidence="10">Endoglucanase AA9H</shortName>
    </alternativeName>
    <alternativeName>
        <fullName evidence="10">Glycosyl hydrolase 61 family protein AA9H</fullName>
    </alternativeName>
</protein>
<sequence length="437" mass="46047">MNLSLFTLALVACYSSQLAAAHTVFTTLFVNDVSQGDGTCVRMPSDPSTATFPINDLDSDSMACGFNGTRGVERVCAVNQTAKLSFLFREYADASQQGAIDPNHKGPCAVYMKRVASAINDTAVGSGWFKIWDEGYDNSTQKWCTEKLIQNNGYLSINIPSDLAGGYYLARPELLALHQADKNPPNPQFYTGCAQIYLDSAETAIPKDTVNIPGYVNIHSPSVLYNIWNPPPTPYTMAGPAPYQPGISSISNTTGSKAAKFSAYTAQQNEGLLPQDAAITNANWWGVEVASYTTEAGCWDASSDCWNQTTVCYDCAPPTGDKGCREWEAHCTAIQKGCEGGSFTGPPVIVKTEGAMTMAMTATIAPAAEQTGGVYAASSTVVSVGSLGVSEDGKCGDGNGQTCKGSLLGECCSQVGYCGSSESYCGVGCQGNFGVCG</sequence>
<proteinExistence type="evidence at transcript level"/>
<reference key="1">
    <citation type="journal article" date="2011" name="PLoS Genet.">
        <title>Genomic analysis of the necrotrophic fungal pathogens Sclerotinia sclerotiorum and Botrytis cinerea.</title>
        <authorList>
            <person name="Amselem J."/>
            <person name="Cuomo C.A."/>
            <person name="van Kan J.A.L."/>
            <person name="Viaud M."/>
            <person name="Benito E.P."/>
            <person name="Couloux A."/>
            <person name="Coutinho P.M."/>
            <person name="de Vries R.P."/>
            <person name="Dyer P.S."/>
            <person name="Fillinger S."/>
            <person name="Fournier E."/>
            <person name="Gout L."/>
            <person name="Hahn M."/>
            <person name="Kohn L."/>
            <person name="Lapalu N."/>
            <person name="Plummer K.M."/>
            <person name="Pradier J.-M."/>
            <person name="Quevillon E."/>
            <person name="Sharon A."/>
            <person name="Simon A."/>
            <person name="ten Have A."/>
            <person name="Tudzynski B."/>
            <person name="Tudzynski P."/>
            <person name="Wincker P."/>
            <person name="Andrew M."/>
            <person name="Anthouard V."/>
            <person name="Beever R.E."/>
            <person name="Beffa R."/>
            <person name="Benoit I."/>
            <person name="Bouzid O."/>
            <person name="Brault B."/>
            <person name="Chen Z."/>
            <person name="Choquer M."/>
            <person name="Collemare J."/>
            <person name="Cotton P."/>
            <person name="Danchin E.G."/>
            <person name="Da Silva C."/>
            <person name="Gautier A."/>
            <person name="Giraud C."/>
            <person name="Giraud T."/>
            <person name="Gonzalez C."/>
            <person name="Grossetete S."/>
            <person name="Gueldener U."/>
            <person name="Henrissat B."/>
            <person name="Howlett B.J."/>
            <person name="Kodira C."/>
            <person name="Kretschmer M."/>
            <person name="Lappartient A."/>
            <person name="Leroch M."/>
            <person name="Levis C."/>
            <person name="Mauceli E."/>
            <person name="Neuveglise C."/>
            <person name="Oeser B."/>
            <person name="Pearson M."/>
            <person name="Poulain J."/>
            <person name="Poussereau N."/>
            <person name="Quesneville H."/>
            <person name="Rascle C."/>
            <person name="Schumacher J."/>
            <person name="Segurens B."/>
            <person name="Sexton A."/>
            <person name="Silva E."/>
            <person name="Sirven C."/>
            <person name="Soanes D.M."/>
            <person name="Talbot N.J."/>
            <person name="Templeton M."/>
            <person name="Yandava C."/>
            <person name="Yarden O."/>
            <person name="Zeng Q."/>
            <person name="Rollins J.A."/>
            <person name="Lebrun M.-H."/>
            <person name="Dickman M."/>
        </authorList>
    </citation>
    <scope>NUCLEOTIDE SEQUENCE [LARGE SCALE GENOMIC DNA]</scope>
    <source>
        <strain>B05.10</strain>
    </source>
</reference>
<reference key="2">
    <citation type="journal article" date="2012" name="Eukaryot. Cell">
        <title>Genome update of Botrytis cinerea strains B05.10 and T4.</title>
        <authorList>
            <person name="Staats M."/>
            <person name="van Kan J.A.L."/>
        </authorList>
    </citation>
    <scope>NUCLEOTIDE SEQUENCE [LARGE SCALE GENOMIC DNA]</scope>
    <source>
        <strain>B05.10</strain>
    </source>
</reference>
<reference key="3">
    <citation type="journal article" date="2017" name="Mol. Plant Pathol.">
        <title>A gapless genome sequence of the fungus Botrytis cinerea.</title>
        <authorList>
            <person name="van Kan J.A.L."/>
            <person name="Stassen J.H.M."/>
            <person name="Mosbach A."/>
            <person name="van der Lee T.A.J."/>
            <person name="Faino L."/>
            <person name="Farmer A.D."/>
            <person name="Papasotiriou D.G."/>
            <person name="Zhou S."/>
            <person name="Seidl M.F."/>
            <person name="Cottam E."/>
            <person name="Edel D."/>
            <person name="Hahn M."/>
            <person name="Schwartz D.C."/>
            <person name="Dietrich R.A."/>
            <person name="Widdison S."/>
            <person name="Scalliet G."/>
        </authorList>
    </citation>
    <scope>NUCLEOTIDE SEQUENCE [LARGE SCALE GENOMIC DNA]</scope>
    <source>
        <strain>B05.10</strain>
    </source>
</reference>
<reference key="4">
    <citation type="journal article" date="2022" name="Microbiol. Spectr.">
        <title>The Linker Region Promotes Activity and Binding Efficiency of Modular LPMO towards Polymeric Substrate.</title>
        <authorList>
            <person name="Srivastava A."/>
            <person name="Nagar P."/>
            <person name="Rathore S."/>
            <person name="Adlakha N."/>
        </authorList>
    </citation>
    <scope>IDENTIFICATION</scope>
    <scope>INDUCTION</scope>
    <scope>FUNCTION</scope>
</reference>
<dbReference type="EC" id="1.14.99.56" evidence="11"/>
<dbReference type="EMBL" id="CP009816">
    <property type="protein sequence ID" value="ATZ55836.1"/>
    <property type="molecule type" value="Genomic_DNA"/>
</dbReference>
<dbReference type="SMR" id="A0A384JZ02"/>
<dbReference type="EnsemblFungi" id="Bcin12g03920.1">
    <property type="protein sequence ID" value="Bcin12p03920.1"/>
    <property type="gene ID" value="Bcin12g03920"/>
</dbReference>
<dbReference type="VEuPathDB" id="FungiDB:Bcin12g03920"/>
<dbReference type="OrthoDB" id="5985073at2759"/>
<dbReference type="Proteomes" id="UP000001798">
    <property type="component" value="Chromosome bcin12"/>
</dbReference>
<dbReference type="GO" id="GO:0005576">
    <property type="term" value="C:extracellular region"/>
    <property type="evidence" value="ECO:0007669"/>
    <property type="project" value="UniProtKB-SubCell"/>
</dbReference>
<dbReference type="GO" id="GO:0008061">
    <property type="term" value="F:chitin binding"/>
    <property type="evidence" value="ECO:0007669"/>
    <property type="project" value="UniProtKB-KW"/>
</dbReference>
<dbReference type="GO" id="GO:0046872">
    <property type="term" value="F:metal ion binding"/>
    <property type="evidence" value="ECO:0007669"/>
    <property type="project" value="UniProtKB-KW"/>
</dbReference>
<dbReference type="GO" id="GO:0004497">
    <property type="term" value="F:monooxygenase activity"/>
    <property type="evidence" value="ECO:0007669"/>
    <property type="project" value="UniProtKB-KW"/>
</dbReference>
<dbReference type="GO" id="GO:0030245">
    <property type="term" value="P:cellulose catabolic process"/>
    <property type="evidence" value="ECO:0007669"/>
    <property type="project" value="UniProtKB-KW"/>
</dbReference>
<dbReference type="CDD" id="cd11618">
    <property type="entry name" value="ChtBD1_1"/>
    <property type="match status" value="1"/>
</dbReference>
<dbReference type="CDD" id="cd21175">
    <property type="entry name" value="LPMO_AA9"/>
    <property type="match status" value="1"/>
</dbReference>
<dbReference type="Gene3D" id="2.70.50.70">
    <property type="match status" value="1"/>
</dbReference>
<dbReference type="Gene3D" id="3.30.60.10">
    <property type="entry name" value="Endochitinase-like"/>
    <property type="match status" value="1"/>
</dbReference>
<dbReference type="InterPro" id="IPR049892">
    <property type="entry name" value="AA9"/>
</dbReference>
<dbReference type="InterPro" id="IPR005103">
    <property type="entry name" value="AA9_LPMO"/>
</dbReference>
<dbReference type="InterPro" id="IPR001002">
    <property type="entry name" value="Chitin-bd_1"/>
</dbReference>
<dbReference type="InterPro" id="IPR036861">
    <property type="entry name" value="Endochitinase-like_sf"/>
</dbReference>
<dbReference type="PANTHER" id="PTHR33353:SF32">
    <property type="entry name" value="ENDO-BETA-1,4-GLUCANASE D"/>
    <property type="match status" value="1"/>
</dbReference>
<dbReference type="PANTHER" id="PTHR33353">
    <property type="entry name" value="PUTATIVE (AFU_ORTHOLOGUE AFUA_1G12560)-RELATED"/>
    <property type="match status" value="1"/>
</dbReference>
<dbReference type="Pfam" id="PF03443">
    <property type="entry name" value="AA9"/>
    <property type="match status" value="1"/>
</dbReference>
<dbReference type="SMART" id="SM00270">
    <property type="entry name" value="ChtBD1"/>
    <property type="match status" value="1"/>
</dbReference>
<dbReference type="SUPFAM" id="SSF57016">
    <property type="entry name" value="Plant lectins/antimicrobial peptides"/>
    <property type="match status" value="1"/>
</dbReference>
<dbReference type="PROSITE" id="PS50941">
    <property type="entry name" value="CHIT_BIND_I_2"/>
    <property type="match status" value="1"/>
</dbReference>
<organism>
    <name type="scientific">Botryotinia fuckeliana (strain B05.10)</name>
    <name type="common">Noble rot fungus</name>
    <name type="synonym">Botrytis cinerea</name>
    <dbReference type="NCBI Taxonomy" id="332648"/>
    <lineage>
        <taxon>Eukaryota</taxon>
        <taxon>Fungi</taxon>
        <taxon>Dikarya</taxon>
        <taxon>Ascomycota</taxon>
        <taxon>Pezizomycotina</taxon>
        <taxon>Leotiomycetes</taxon>
        <taxon>Helotiales</taxon>
        <taxon>Sclerotiniaceae</taxon>
        <taxon>Botrytis</taxon>
    </lineage>
</organism>
<comment type="function">
    <text evidence="11">Lytic polysaccharide monooxygenase (LPMO) that depolymerizes crystalline and amorphous polysaccharides via the oxidation of scissile alpha- or beta-(1-4)-glycosidic bonds, yielding C1 and C4 oxidation products (Probable). Catalysis by LPMOs requires the reduction of the active-site copper from Cu(II) to Cu(I) by a reducing agent and H(2)O(2) or O(2) as a cosubstrate (Probable).</text>
</comment>
<comment type="catalytic activity">
    <reaction evidence="11">
        <text>[(1-&gt;4)-beta-D-glucosyl]n+m + reduced acceptor + O2 = 4-dehydro-beta-D-glucosyl-[(1-&gt;4)-beta-D-glucosyl]n-1 + [(1-&gt;4)-beta-D-glucosyl]m + acceptor + H2O.</text>
        <dbReference type="EC" id="1.14.99.56"/>
    </reaction>
</comment>
<comment type="cofactor">
    <cofactor evidence="11">
        <name>Cu(2+)</name>
        <dbReference type="ChEBI" id="CHEBI:29036"/>
    </cofactor>
    <text evidence="11">Binds 1 copper ion per subunit.</text>
</comment>
<comment type="subcellular location">
    <subcellularLocation>
        <location evidence="11">Secreted</location>
    </subcellularLocation>
</comment>
<comment type="induction">
    <text evidence="8">Expression is slowly increased in cellulose-inducible conditions (in Avicel- and wheat bran-containing complex medium).</text>
</comment>
<comment type="biotechnology">
    <text evidence="11">Lignocellulose is the most abundant polymeric composite on Earth and is a recalcitrant but promising renewable substrate for industrial biotechnology applications. Together with cellobiose dehydrogenases (CDHs) an enzymatic system capable of oxidative cellulose cleavage is formed, which increases the efficiency of cellulases and put LPMOs at focus of biofuel research.</text>
</comment>
<comment type="similarity">
    <text evidence="10">Belongs to the polysaccharide monooxygenase AA9 family.</text>
</comment>
<gene>
    <name evidence="9" type="primary">AA9H</name>
    <name type="ORF">BCIN_12g03920</name>
</gene>
<feature type="signal peptide" evidence="5">
    <location>
        <begin position="1"/>
        <end position="21"/>
    </location>
</feature>
<feature type="chain" id="PRO_5017086958" description="AA9 family lytic polysaccharide monooxygenase H" evidence="5">
    <location>
        <begin position="22"/>
        <end position="437"/>
    </location>
</feature>
<feature type="domain" description="Chitin-binding type-1" evidence="6">
    <location>
        <begin position="392"/>
        <end position="437"/>
    </location>
</feature>
<feature type="binding site" evidence="1">
    <location>
        <position position="22"/>
    </location>
    <ligand>
        <name>Cu(2+)</name>
        <dbReference type="ChEBI" id="CHEBI:29036"/>
    </ligand>
</feature>
<feature type="binding site" evidence="4">
    <location>
        <position position="104"/>
    </location>
    <ligand>
        <name>Cu(2+)</name>
        <dbReference type="ChEBI" id="CHEBI:29036"/>
    </ligand>
</feature>
<feature type="binding site" evidence="3">
    <location>
        <position position="178"/>
    </location>
    <ligand>
        <name>O2</name>
        <dbReference type="ChEBI" id="CHEBI:15379"/>
    </ligand>
</feature>
<feature type="binding site" evidence="3">
    <location>
        <position position="188"/>
    </location>
    <ligand>
        <name>O2</name>
        <dbReference type="ChEBI" id="CHEBI:15379"/>
    </ligand>
</feature>
<feature type="binding site" evidence="1">
    <location>
        <position position="190"/>
    </location>
    <ligand>
        <name>Cu(2+)</name>
        <dbReference type="ChEBI" id="CHEBI:29036"/>
    </ligand>
</feature>
<feature type="glycosylation site" description="N-linked (GlcNAc...) asparagine" evidence="7">
    <location>
        <position position="67"/>
    </location>
</feature>
<feature type="glycosylation site" description="N-linked (GlcNAc...) asparagine" evidence="7">
    <location>
        <position position="79"/>
    </location>
</feature>
<feature type="glycosylation site" description="N-linked (GlcNAc...) asparagine" evidence="7">
    <location>
        <position position="120"/>
    </location>
</feature>
<feature type="glycosylation site" description="N-linked (GlcNAc...) asparagine" evidence="7">
    <location>
        <position position="138"/>
    </location>
</feature>
<feature type="glycosylation site" description="N-linked (GlcNAc...) asparagine" evidence="7">
    <location>
        <position position="252"/>
    </location>
</feature>
<feature type="glycosylation site" description="N-linked (GlcNAc...) asparagine" evidence="7">
    <location>
        <position position="307"/>
    </location>
</feature>
<feature type="disulfide bond" evidence="2">
    <location>
        <begin position="64"/>
        <end position="193"/>
    </location>
</feature>
<feature type="disulfide bond" evidence="6">
    <location>
        <begin position="395"/>
        <end position="412"/>
    </location>
</feature>
<feature type="disulfide bond" evidence="6">
    <location>
        <begin position="403"/>
        <end position="418"/>
    </location>
</feature>
<feature type="disulfide bond" evidence="6">
    <location>
        <begin position="411"/>
        <end position="425"/>
    </location>
</feature>
<feature type="disulfide bond" evidence="6">
    <location>
        <begin position="429"/>
        <end position="436"/>
    </location>
</feature>
<accession>A0A384JZ02</accession>
<evidence type="ECO:0000250" key="1">
    <source>
        <dbReference type="UniProtKB" id="G2R6N0"/>
    </source>
</evidence>
<evidence type="ECO:0000250" key="2">
    <source>
        <dbReference type="UniProtKB" id="Q1K4Q1"/>
    </source>
</evidence>
<evidence type="ECO:0000250" key="3">
    <source>
        <dbReference type="UniProtKB" id="Q1K8B6"/>
    </source>
</evidence>
<evidence type="ECO:0000250" key="4">
    <source>
        <dbReference type="UniProtKB" id="Q4WP32"/>
    </source>
</evidence>
<evidence type="ECO:0000255" key="5"/>
<evidence type="ECO:0000255" key="6">
    <source>
        <dbReference type="PROSITE-ProRule" id="PRU00261"/>
    </source>
</evidence>
<evidence type="ECO:0000255" key="7">
    <source>
        <dbReference type="PROSITE-ProRule" id="PRU00498"/>
    </source>
</evidence>
<evidence type="ECO:0000269" key="8">
    <source>
    </source>
</evidence>
<evidence type="ECO:0000303" key="9">
    <source>
    </source>
</evidence>
<evidence type="ECO:0000305" key="10"/>
<evidence type="ECO:0000305" key="11">
    <source>
    </source>
</evidence>
<name>LP9H_BOTFB</name>
<keyword id="KW-0119">Carbohydrate metabolism</keyword>
<keyword id="KW-0136">Cellulose degradation</keyword>
<keyword id="KW-0147">Chitin-binding</keyword>
<keyword id="KW-0186">Copper</keyword>
<keyword id="KW-1015">Disulfide bond</keyword>
<keyword id="KW-0325">Glycoprotein</keyword>
<keyword id="KW-0479">Metal-binding</keyword>
<keyword id="KW-0503">Monooxygenase</keyword>
<keyword id="KW-0560">Oxidoreductase</keyword>
<keyword id="KW-0624">Polysaccharide degradation</keyword>
<keyword id="KW-1185">Reference proteome</keyword>
<keyword id="KW-0964">Secreted</keyword>
<keyword id="KW-0732">Signal</keyword>